<name>GET3_PARBP</name>
<protein>
    <recommendedName>
        <fullName evidence="1">ATPase GET3</fullName>
        <ecNumber evidence="1">3.6.-.-</ecNumber>
    </recommendedName>
    <alternativeName>
        <fullName evidence="1">Arsenical pump-driving ATPase</fullName>
    </alternativeName>
    <alternativeName>
        <fullName evidence="1">Arsenite-stimulated ATPase</fullName>
    </alternativeName>
    <alternativeName>
        <fullName evidence="1">Golgi to ER traffic protein 3</fullName>
    </alternativeName>
    <alternativeName>
        <fullName evidence="1">Guided entry of tail-anchored proteins 3</fullName>
    </alternativeName>
</protein>
<reference key="1">
    <citation type="journal article" date="2011" name="PLoS Genet.">
        <title>Comparative genomic analysis of human fungal pathogens causing paracoccidioidomycosis.</title>
        <authorList>
            <person name="Desjardins C.A."/>
            <person name="Champion M.D."/>
            <person name="Holder J.W."/>
            <person name="Muszewska A."/>
            <person name="Goldberg J."/>
            <person name="Bailao A.M."/>
            <person name="Brigido M.M."/>
            <person name="Ferreira M.E."/>
            <person name="Garcia A.M."/>
            <person name="Grynberg M."/>
            <person name="Gujja S."/>
            <person name="Heiman D.I."/>
            <person name="Henn M.R."/>
            <person name="Kodira C.D."/>
            <person name="Leon-Narvaez H."/>
            <person name="Longo L.V.G."/>
            <person name="Ma L.-J."/>
            <person name="Malavazi I."/>
            <person name="Matsuo A.L."/>
            <person name="Morais F.V."/>
            <person name="Pereira M."/>
            <person name="Rodriguez-Brito S."/>
            <person name="Sakthikumar S."/>
            <person name="Salem-Izacc S.M."/>
            <person name="Sykes S.M."/>
            <person name="Teixeira M.M."/>
            <person name="Vallejo M.C."/>
            <person name="Walter M.E."/>
            <person name="Yandava C."/>
            <person name="Young S."/>
            <person name="Zeng Q."/>
            <person name="Zucker J."/>
            <person name="Felipe M.S."/>
            <person name="Goldman G.H."/>
            <person name="Haas B.J."/>
            <person name="McEwen J.G."/>
            <person name="Nino-Vega G."/>
            <person name="Puccia R."/>
            <person name="San-Blas G."/>
            <person name="Soares C.M."/>
            <person name="Birren B.W."/>
            <person name="Cuomo C.A."/>
        </authorList>
    </citation>
    <scope>NUCLEOTIDE SEQUENCE [LARGE SCALE GENOMIC DNA]</scope>
    <source>
        <strain>Pb03</strain>
    </source>
</reference>
<comment type="function">
    <text evidence="1">ATPase required for the post-translational delivery of tail-anchored (TA) proteins to the endoplasmic reticulum. Recognizes and selectively binds the transmembrane domain of TA proteins in the cytosol. This complex then targets to the endoplasmic reticulum by membrane-bound receptors, where the tail-anchored protein is released for insertion. This process is regulated by ATP binding and hydrolysis. ATP binding drives the homodimer towards the closed dimer state, facilitating recognition of newly synthesized TA membrane proteins. ATP hydrolysis is required for insertion. Subsequently, the homodimer reverts towards the open dimer state, lowering its affinity for the membrane-bound receptor, and returning it to the cytosol to initiate a new round of targeting.</text>
</comment>
<comment type="subunit">
    <text evidence="1">Homodimer.</text>
</comment>
<comment type="subcellular location">
    <subcellularLocation>
        <location evidence="1">Cytoplasm</location>
    </subcellularLocation>
    <subcellularLocation>
        <location evidence="1">Endoplasmic reticulum</location>
    </subcellularLocation>
</comment>
<comment type="similarity">
    <text evidence="1">Belongs to the arsA ATPase family.</text>
</comment>
<dbReference type="EC" id="3.6.-.-" evidence="1"/>
<dbReference type="EMBL" id="KN305533">
    <property type="protein sequence ID" value="EEH19962.1"/>
    <property type="molecule type" value="Genomic_DNA"/>
</dbReference>
<dbReference type="SMR" id="C0S3F7"/>
<dbReference type="VEuPathDB" id="FungiDB:PABG_02221"/>
<dbReference type="HOGENOM" id="CLU_040761_0_0_1"/>
<dbReference type="OrthoDB" id="34831at33183"/>
<dbReference type="GO" id="GO:0043529">
    <property type="term" value="C:GET complex"/>
    <property type="evidence" value="ECO:0007669"/>
    <property type="project" value="TreeGrafter"/>
</dbReference>
<dbReference type="GO" id="GO:0005524">
    <property type="term" value="F:ATP binding"/>
    <property type="evidence" value="ECO:0007669"/>
    <property type="project" value="UniProtKB-UniRule"/>
</dbReference>
<dbReference type="GO" id="GO:0016887">
    <property type="term" value="F:ATP hydrolysis activity"/>
    <property type="evidence" value="ECO:0007669"/>
    <property type="project" value="InterPro"/>
</dbReference>
<dbReference type="GO" id="GO:0046872">
    <property type="term" value="F:metal ion binding"/>
    <property type="evidence" value="ECO:0007669"/>
    <property type="project" value="UniProtKB-KW"/>
</dbReference>
<dbReference type="GO" id="GO:0071816">
    <property type="term" value="P:tail-anchored membrane protein insertion into ER membrane"/>
    <property type="evidence" value="ECO:0007669"/>
    <property type="project" value="TreeGrafter"/>
</dbReference>
<dbReference type="CDD" id="cd02035">
    <property type="entry name" value="ArsA"/>
    <property type="match status" value="1"/>
</dbReference>
<dbReference type="FunFam" id="3.40.50.300:FF:000235">
    <property type="entry name" value="ATPase ASNA1"/>
    <property type="match status" value="1"/>
</dbReference>
<dbReference type="Gene3D" id="3.40.50.300">
    <property type="entry name" value="P-loop containing nucleotide triphosphate hydrolases"/>
    <property type="match status" value="1"/>
</dbReference>
<dbReference type="HAMAP" id="MF_03112">
    <property type="entry name" value="Asna1_Get3"/>
    <property type="match status" value="1"/>
</dbReference>
<dbReference type="InterPro" id="IPR025723">
    <property type="entry name" value="Anion-transp_ATPase-like_dom"/>
</dbReference>
<dbReference type="InterPro" id="IPR016300">
    <property type="entry name" value="ATPase_ArsA/GET3"/>
</dbReference>
<dbReference type="InterPro" id="IPR027542">
    <property type="entry name" value="ATPase_ArsA/GET3_euk"/>
</dbReference>
<dbReference type="InterPro" id="IPR027417">
    <property type="entry name" value="P-loop_NTPase"/>
</dbReference>
<dbReference type="NCBIfam" id="TIGR00345">
    <property type="entry name" value="GET3_arsA_TRC40"/>
    <property type="match status" value="1"/>
</dbReference>
<dbReference type="PANTHER" id="PTHR10803">
    <property type="entry name" value="ARSENICAL PUMP-DRIVING ATPASE ARSENITE-TRANSLOCATING ATPASE"/>
    <property type="match status" value="1"/>
</dbReference>
<dbReference type="PANTHER" id="PTHR10803:SF3">
    <property type="entry name" value="ATPASE GET3"/>
    <property type="match status" value="1"/>
</dbReference>
<dbReference type="Pfam" id="PF02374">
    <property type="entry name" value="ArsA_ATPase"/>
    <property type="match status" value="1"/>
</dbReference>
<dbReference type="SUPFAM" id="SSF52540">
    <property type="entry name" value="P-loop containing nucleoside triphosphate hydrolases"/>
    <property type="match status" value="1"/>
</dbReference>
<gene>
    <name evidence="1" type="primary">GET3</name>
    <name type="ORF">PABG_02221</name>
</gene>
<organism>
    <name type="scientific">Paracoccidioides brasiliensis (strain Pb03)</name>
    <dbReference type="NCBI Taxonomy" id="482561"/>
    <lineage>
        <taxon>Eukaryota</taxon>
        <taxon>Fungi</taxon>
        <taxon>Dikarya</taxon>
        <taxon>Ascomycota</taxon>
        <taxon>Pezizomycotina</taxon>
        <taxon>Eurotiomycetes</taxon>
        <taxon>Eurotiomycetidae</taxon>
        <taxon>Onygenales</taxon>
        <taxon>Ajellomycetaceae</taxon>
        <taxon>Paracoccidioides</taxon>
    </lineage>
</organism>
<sequence>MSSAAMVKAEDSLEPTLQNLLDQKTLRWVFVGGKGGVGKTTTSCSLAIQLAKVRKSVLLISTDPAHNLSDAFGQKFGKEARLIDGFTNLSAMEIDPNGSIQDLLAAGGGQGDDSMGGLGIGGMMQDLAFSIPGVDEAMSFAEVLKQVKSLSYEVIIFDTAPTGHTLRFLQFPTVLEKALAKLAQLSTQFGPMLNSILGGRGGLPGGQNLDEILSKMESLRETIAEVNAQFKDADLTTFVCVCIAEFLSLYETERMIQELTSYHIDTHCIVVNQLLFPGKDSSCEQCKARRKMQKKYLNEIEELYEDFNVVRMPMLVEEVRGKEKLEKFSDMLIHPYVPPQE</sequence>
<proteinExistence type="inferred from homology"/>
<evidence type="ECO:0000255" key="1">
    <source>
        <dbReference type="HAMAP-Rule" id="MF_03112"/>
    </source>
</evidence>
<feature type="chain" id="PRO_0000388218" description="ATPase GET3">
    <location>
        <begin position="1"/>
        <end position="341"/>
    </location>
</feature>
<feature type="active site" evidence="1">
    <location>
        <position position="63"/>
    </location>
</feature>
<feature type="binding site" evidence="1">
    <location>
        <begin position="34"/>
        <end position="41"/>
    </location>
    <ligand>
        <name>ATP</name>
        <dbReference type="ChEBI" id="CHEBI:30616"/>
    </ligand>
</feature>
<feature type="binding site" evidence="1">
    <location>
        <position position="245"/>
    </location>
    <ligand>
        <name>ATP</name>
        <dbReference type="ChEBI" id="CHEBI:30616"/>
    </ligand>
</feature>
<feature type="binding site" evidence="1">
    <location>
        <position position="272"/>
    </location>
    <ligand>
        <name>ATP</name>
        <dbReference type="ChEBI" id="CHEBI:30616"/>
    </ligand>
</feature>
<feature type="binding site" evidence="1">
    <location>
        <position position="283"/>
    </location>
    <ligand>
        <name>Zn(2+)</name>
        <dbReference type="ChEBI" id="CHEBI:29105"/>
        <note>ligand shared between dimeric partners</note>
    </ligand>
</feature>
<feature type="binding site" evidence="1">
    <location>
        <position position="286"/>
    </location>
    <ligand>
        <name>Zn(2+)</name>
        <dbReference type="ChEBI" id="CHEBI:29105"/>
        <note>ligand shared between dimeric partners</note>
    </ligand>
</feature>
<accession>C0S3F7</accession>
<keyword id="KW-0067">ATP-binding</keyword>
<keyword id="KW-0963">Cytoplasm</keyword>
<keyword id="KW-0256">Endoplasmic reticulum</keyword>
<keyword id="KW-0378">Hydrolase</keyword>
<keyword id="KW-0479">Metal-binding</keyword>
<keyword id="KW-0547">Nucleotide-binding</keyword>
<keyword id="KW-0813">Transport</keyword>
<keyword id="KW-0862">Zinc</keyword>